<evidence type="ECO:0000250" key="1"/>
<evidence type="ECO:0000305" key="2"/>
<keyword id="KW-0131">Cell cycle</keyword>
<keyword id="KW-0132">Cell division</keyword>
<keyword id="KW-0133">Cell shape</keyword>
<keyword id="KW-0961">Cell wall biogenesis/degradation</keyword>
<keyword id="KW-0963">Cytoplasm</keyword>
<keyword id="KW-0274">FAD</keyword>
<keyword id="KW-0285">Flavoprotein</keyword>
<keyword id="KW-0521">NADP</keyword>
<keyword id="KW-0560">Oxidoreductase</keyword>
<keyword id="KW-0573">Peptidoglycan synthesis</keyword>
<keyword id="KW-1185">Reference proteome</keyword>
<gene>
    <name type="primary">murB</name>
    <name type="ordered locus">STM4137</name>
    <name type="ORF">STMF1.1</name>
</gene>
<proteinExistence type="inferred from homology"/>
<comment type="function">
    <text>Cell wall formation.</text>
</comment>
<comment type="catalytic activity">
    <reaction>
        <text>UDP-N-acetyl-alpha-D-muramate + NADP(+) = UDP-N-acetyl-3-O-(1-carboxyvinyl)-alpha-D-glucosamine + NADPH + H(+)</text>
        <dbReference type="Rhea" id="RHEA:12248"/>
        <dbReference type="ChEBI" id="CHEBI:15378"/>
        <dbReference type="ChEBI" id="CHEBI:57783"/>
        <dbReference type="ChEBI" id="CHEBI:58349"/>
        <dbReference type="ChEBI" id="CHEBI:68483"/>
        <dbReference type="ChEBI" id="CHEBI:70757"/>
        <dbReference type="EC" id="1.3.1.98"/>
    </reaction>
</comment>
<comment type="cofactor">
    <cofactor>
        <name>FAD</name>
        <dbReference type="ChEBI" id="CHEBI:57692"/>
    </cofactor>
</comment>
<comment type="pathway">
    <text>Cell wall biogenesis; peptidoglycan biosynthesis.</text>
</comment>
<comment type="subunit">
    <text>Monomer.</text>
</comment>
<comment type="subcellular location">
    <subcellularLocation>
        <location evidence="1">Cytoplasm</location>
    </subcellularLocation>
</comment>
<comment type="similarity">
    <text evidence="2">Belongs to the MurB family.</text>
</comment>
<feature type="chain" id="PRO_0000179253" description="UDP-N-acetylenolpyruvoylglucosamine reductase">
    <location>
        <begin position="1"/>
        <end position="342"/>
    </location>
</feature>
<feature type="domain" description="FAD-binding PCMH-type">
    <location>
        <begin position="13"/>
        <end position="183"/>
    </location>
</feature>
<feature type="active site" evidence="1">
    <location>
        <position position="159"/>
    </location>
</feature>
<feature type="active site" description="Proton donor" evidence="1">
    <location>
        <position position="229"/>
    </location>
</feature>
<feature type="active site" evidence="1">
    <location>
        <position position="325"/>
    </location>
</feature>
<accession>P37417</accession>
<sequence>MTHSLKPWNTFGIDHCAKHIVCAENEQQLLSAWQQATREGLPVMILGEGSNVLFLENYAGTVILNRLKGIEVNETADAWHLHVGAGENWHQLVRYALDNNMPGLENLALIPGCVGSSPIQNIGAYGVELQRVCDYVDCVELETGKRLRLSAAECRFGYRDSIFKNEYQDRVAIVAVGLRLSKQWQPVLTYGDLTCLDPKTVTAQQVFDAVCHMRTTKLPDPKVNGNAGSFFKNPVVAADIAMELLERFPNAPHYPQADGSVKLAAGWLIDQCQLKGVTIGGAAVHRQQALVLINANDATSKDVVALAHHVRQKVGEKFNVWLEPEVRFIGRSGEVNAVESIA</sequence>
<organism>
    <name type="scientific">Salmonella typhimurium (strain LT2 / SGSC1412 / ATCC 700720)</name>
    <dbReference type="NCBI Taxonomy" id="99287"/>
    <lineage>
        <taxon>Bacteria</taxon>
        <taxon>Pseudomonadati</taxon>
        <taxon>Pseudomonadota</taxon>
        <taxon>Gammaproteobacteria</taxon>
        <taxon>Enterobacterales</taxon>
        <taxon>Enterobacteriaceae</taxon>
        <taxon>Salmonella</taxon>
    </lineage>
</organism>
<dbReference type="EC" id="1.3.1.98"/>
<dbReference type="EMBL" id="L14816">
    <property type="protein sequence ID" value="AAA27163.1"/>
    <property type="molecule type" value="Genomic_DNA"/>
</dbReference>
<dbReference type="EMBL" id="AF170176">
    <property type="protein sequence ID" value="AAF33492.1"/>
    <property type="molecule type" value="Genomic_DNA"/>
</dbReference>
<dbReference type="EMBL" id="AE006468">
    <property type="protein sequence ID" value="AAL22970.1"/>
    <property type="molecule type" value="Genomic_DNA"/>
</dbReference>
<dbReference type="RefSeq" id="NP_463011.1">
    <property type="nucleotide sequence ID" value="NC_003197.2"/>
</dbReference>
<dbReference type="RefSeq" id="WP_000149795.1">
    <property type="nucleotide sequence ID" value="NC_003197.2"/>
</dbReference>
<dbReference type="SMR" id="P37417"/>
<dbReference type="STRING" id="99287.STM4137"/>
<dbReference type="PaxDb" id="99287-STM4137"/>
<dbReference type="GeneID" id="1255663"/>
<dbReference type="KEGG" id="stm:STM4137"/>
<dbReference type="PATRIC" id="fig|99287.12.peg.4353"/>
<dbReference type="HOGENOM" id="CLU_035304_0_0_6"/>
<dbReference type="OMA" id="APLTWFR"/>
<dbReference type="PhylomeDB" id="P37417"/>
<dbReference type="BioCyc" id="SENT99287:STM4137-MONOMER"/>
<dbReference type="UniPathway" id="UPA00219"/>
<dbReference type="Proteomes" id="UP000001014">
    <property type="component" value="Chromosome"/>
</dbReference>
<dbReference type="GO" id="GO:0005829">
    <property type="term" value="C:cytosol"/>
    <property type="evidence" value="ECO:0000318"/>
    <property type="project" value="GO_Central"/>
</dbReference>
<dbReference type="GO" id="GO:0071949">
    <property type="term" value="F:FAD binding"/>
    <property type="evidence" value="ECO:0007669"/>
    <property type="project" value="InterPro"/>
</dbReference>
<dbReference type="GO" id="GO:0050660">
    <property type="term" value="F:flavin adenine dinucleotide binding"/>
    <property type="evidence" value="ECO:0000318"/>
    <property type="project" value="GO_Central"/>
</dbReference>
<dbReference type="GO" id="GO:0008762">
    <property type="term" value="F:UDP-N-acetylmuramate dehydrogenase activity"/>
    <property type="evidence" value="ECO:0000318"/>
    <property type="project" value="GO_Central"/>
</dbReference>
<dbReference type="GO" id="GO:0051301">
    <property type="term" value="P:cell division"/>
    <property type="evidence" value="ECO:0007669"/>
    <property type="project" value="UniProtKB-KW"/>
</dbReference>
<dbReference type="GO" id="GO:0071555">
    <property type="term" value="P:cell wall organization"/>
    <property type="evidence" value="ECO:0000318"/>
    <property type="project" value="GO_Central"/>
</dbReference>
<dbReference type="GO" id="GO:0009252">
    <property type="term" value="P:peptidoglycan biosynthetic process"/>
    <property type="evidence" value="ECO:0007669"/>
    <property type="project" value="UniProtKB-UniRule"/>
</dbReference>
<dbReference type="GO" id="GO:0008360">
    <property type="term" value="P:regulation of cell shape"/>
    <property type="evidence" value="ECO:0007669"/>
    <property type="project" value="UniProtKB-KW"/>
</dbReference>
<dbReference type="FunFam" id="3.30.465.10:FF:000018">
    <property type="entry name" value="UDP-N-acetylenolpyruvoylglucosamine reductase"/>
    <property type="match status" value="1"/>
</dbReference>
<dbReference type="FunFam" id="3.90.78.10:FF:000002">
    <property type="entry name" value="UDP-N-acetylenolpyruvoylglucosamine reductase"/>
    <property type="match status" value="1"/>
</dbReference>
<dbReference type="Gene3D" id="3.30.465.10">
    <property type="match status" value="1"/>
</dbReference>
<dbReference type="Gene3D" id="3.90.78.10">
    <property type="entry name" value="UDP-N-acetylenolpyruvoylglucosamine reductase, C-terminal domain"/>
    <property type="match status" value="1"/>
</dbReference>
<dbReference type="Gene3D" id="3.30.43.10">
    <property type="entry name" value="Uridine Diphospho-n-acetylenolpyruvylglucosamine Reductase, domain 2"/>
    <property type="match status" value="1"/>
</dbReference>
<dbReference type="HAMAP" id="MF_00037">
    <property type="entry name" value="MurB"/>
    <property type="match status" value="1"/>
</dbReference>
<dbReference type="InterPro" id="IPR016166">
    <property type="entry name" value="FAD-bd_PCMH"/>
</dbReference>
<dbReference type="InterPro" id="IPR036318">
    <property type="entry name" value="FAD-bd_PCMH-like_sf"/>
</dbReference>
<dbReference type="InterPro" id="IPR016167">
    <property type="entry name" value="FAD-bd_PCMH_sub1"/>
</dbReference>
<dbReference type="InterPro" id="IPR016169">
    <property type="entry name" value="FAD-bd_PCMH_sub2"/>
</dbReference>
<dbReference type="InterPro" id="IPR003170">
    <property type="entry name" value="MurB"/>
</dbReference>
<dbReference type="InterPro" id="IPR011601">
    <property type="entry name" value="MurB_C"/>
</dbReference>
<dbReference type="InterPro" id="IPR036635">
    <property type="entry name" value="MurB_C_sf"/>
</dbReference>
<dbReference type="InterPro" id="IPR006094">
    <property type="entry name" value="Oxid_FAD_bind_N"/>
</dbReference>
<dbReference type="NCBIfam" id="TIGR00179">
    <property type="entry name" value="murB"/>
    <property type="match status" value="1"/>
</dbReference>
<dbReference type="NCBIfam" id="NF000755">
    <property type="entry name" value="PRK00046.1"/>
    <property type="match status" value="1"/>
</dbReference>
<dbReference type="PANTHER" id="PTHR21071">
    <property type="entry name" value="UDP-N-ACETYLENOLPYRUVOYLGLUCOSAMINE REDUCTASE"/>
    <property type="match status" value="1"/>
</dbReference>
<dbReference type="PANTHER" id="PTHR21071:SF4">
    <property type="entry name" value="UDP-N-ACETYLENOLPYRUVOYLGLUCOSAMINE REDUCTASE"/>
    <property type="match status" value="1"/>
</dbReference>
<dbReference type="Pfam" id="PF01565">
    <property type="entry name" value="FAD_binding_4"/>
    <property type="match status" value="1"/>
</dbReference>
<dbReference type="Pfam" id="PF02873">
    <property type="entry name" value="MurB_C"/>
    <property type="match status" value="1"/>
</dbReference>
<dbReference type="SUPFAM" id="SSF56176">
    <property type="entry name" value="FAD-binding/transporter-associated domain-like"/>
    <property type="match status" value="1"/>
</dbReference>
<dbReference type="SUPFAM" id="SSF56194">
    <property type="entry name" value="Uridine diphospho-N-Acetylenolpyruvylglucosamine reductase, MurB, C-terminal domain"/>
    <property type="match status" value="1"/>
</dbReference>
<dbReference type="PROSITE" id="PS51387">
    <property type="entry name" value="FAD_PCMH"/>
    <property type="match status" value="1"/>
</dbReference>
<name>MURB_SALTY</name>
<protein>
    <recommendedName>
        <fullName>UDP-N-acetylenolpyruvoylglucosamine reductase</fullName>
        <ecNumber>1.3.1.98</ecNumber>
    </recommendedName>
    <alternativeName>
        <fullName>UDP-N-acetylmuramate dehydrogenase</fullName>
    </alternativeName>
</protein>
<reference key="1">
    <citation type="journal article" date="1994" name="Arch. Microbiol.">
        <title>Sequence divergence of the murB and rrfB genes from Escherichia coli and Salmonella typhimurium.</title>
        <authorList>
            <person name="Dombrosky P.M."/>
            <person name="Schmid M.B."/>
            <person name="Young K.D."/>
        </authorList>
    </citation>
    <scope>NUCLEOTIDE SEQUENCE [GENOMIC DNA]</scope>
    <source>
        <strain>LT2</strain>
    </source>
</reference>
<reference key="2">
    <citation type="journal article" date="2001" name="Nature">
        <title>Complete genome sequence of Salmonella enterica serovar Typhimurium LT2.</title>
        <authorList>
            <person name="McClelland M."/>
            <person name="Sanderson K.E."/>
            <person name="Spieth J."/>
            <person name="Clifton S.W."/>
            <person name="Latreille P."/>
            <person name="Courtney L."/>
            <person name="Porwollik S."/>
            <person name="Ali J."/>
            <person name="Dante M."/>
            <person name="Du F."/>
            <person name="Hou S."/>
            <person name="Layman D."/>
            <person name="Leonard S."/>
            <person name="Nguyen C."/>
            <person name="Scott K."/>
            <person name="Holmes A."/>
            <person name="Grewal N."/>
            <person name="Mulvaney E."/>
            <person name="Ryan E."/>
            <person name="Sun H."/>
            <person name="Florea L."/>
            <person name="Miller W."/>
            <person name="Stoneking T."/>
            <person name="Nhan M."/>
            <person name="Waterston R."/>
            <person name="Wilson R.K."/>
        </authorList>
    </citation>
    <scope>NUCLEOTIDE SEQUENCE [LARGE SCALE GENOMIC DNA]</scope>
    <source>
        <strain>LT2 / SGSC1412 / ATCC 700720</strain>
    </source>
</reference>